<gene>
    <name evidence="1" type="primary">minE</name>
    <name type="ordered locus">PBPRA1077</name>
</gene>
<sequence>MALLEFFRPKKTTTASVAKERLQIIVAERRSAGQSTPSYLPQLKLDLLEVIRKYVNINPDQVSVNLDQKDEDLSVLELNVTLPEDK</sequence>
<evidence type="ECO:0000255" key="1">
    <source>
        <dbReference type="HAMAP-Rule" id="MF_00262"/>
    </source>
</evidence>
<reference key="1">
    <citation type="journal article" date="2005" name="Science">
        <title>Life at depth: Photobacterium profundum genome sequence and expression analysis.</title>
        <authorList>
            <person name="Vezzi A."/>
            <person name="Campanaro S."/>
            <person name="D'Angelo M."/>
            <person name="Simonato F."/>
            <person name="Vitulo N."/>
            <person name="Lauro F.M."/>
            <person name="Cestaro A."/>
            <person name="Malacrida G."/>
            <person name="Simionati B."/>
            <person name="Cannata N."/>
            <person name="Romualdi C."/>
            <person name="Bartlett D.H."/>
            <person name="Valle G."/>
        </authorList>
    </citation>
    <scope>NUCLEOTIDE SEQUENCE [LARGE SCALE GENOMIC DNA]</scope>
    <source>
        <strain>ATCC BAA-1253 / SS9</strain>
    </source>
</reference>
<protein>
    <recommendedName>
        <fullName evidence="1">Cell division topological specificity factor</fullName>
    </recommendedName>
</protein>
<feature type="chain" id="PRO_0000298143" description="Cell division topological specificity factor">
    <location>
        <begin position="1"/>
        <end position="86"/>
    </location>
</feature>
<keyword id="KW-0131">Cell cycle</keyword>
<keyword id="KW-0132">Cell division</keyword>
<keyword id="KW-1185">Reference proteome</keyword>
<comment type="function">
    <text evidence="1">Prevents the cell division inhibition by proteins MinC and MinD at internal division sites while permitting inhibition at polar sites. This ensures cell division at the proper site by restricting the formation of a division septum at the midpoint of the long axis of the cell.</text>
</comment>
<comment type="similarity">
    <text evidence="1">Belongs to the MinE family.</text>
</comment>
<name>MINE_PHOPR</name>
<accession>Q6LT88</accession>
<proteinExistence type="inferred from homology"/>
<organism>
    <name type="scientific">Photobacterium profundum (strain SS9)</name>
    <dbReference type="NCBI Taxonomy" id="298386"/>
    <lineage>
        <taxon>Bacteria</taxon>
        <taxon>Pseudomonadati</taxon>
        <taxon>Pseudomonadota</taxon>
        <taxon>Gammaproteobacteria</taxon>
        <taxon>Vibrionales</taxon>
        <taxon>Vibrionaceae</taxon>
        <taxon>Photobacterium</taxon>
    </lineage>
</organism>
<dbReference type="EMBL" id="CR378666">
    <property type="protein sequence ID" value="CAG19488.1"/>
    <property type="molecule type" value="Genomic_DNA"/>
</dbReference>
<dbReference type="RefSeq" id="WP_011217821.1">
    <property type="nucleotide sequence ID" value="NC_006370.1"/>
</dbReference>
<dbReference type="SMR" id="Q6LT88"/>
<dbReference type="STRING" id="298386.PBPRA1077"/>
<dbReference type="KEGG" id="ppr:PBPRA1077"/>
<dbReference type="eggNOG" id="COG0851">
    <property type="taxonomic scope" value="Bacteria"/>
</dbReference>
<dbReference type="HOGENOM" id="CLU_137929_2_2_6"/>
<dbReference type="Proteomes" id="UP000000593">
    <property type="component" value="Chromosome 1"/>
</dbReference>
<dbReference type="GO" id="GO:0051301">
    <property type="term" value="P:cell division"/>
    <property type="evidence" value="ECO:0007669"/>
    <property type="project" value="UniProtKB-KW"/>
</dbReference>
<dbReference type="GO" id="GO:0032955">
    <property type="term" value="P:regulation of division septum assembly"/>
    <property type="evidence" value="ECO:0007669"/>
    <property type="project" value="InterPro"/>
</dbReference>
<dbReference type="FunFam" id="3.30.1070.10:FF:000001">
    <property type="entry name" value="Cell division topological specificity factor"/>
    <property type="match status" value="1"/>
</dbReference>
<dbReference type="Gene3D" id="3.30.1070.10">
    <property type="entry name" value="Cell division topological specificity factor MinE"/>
    <property type="match status" value="1"/>
</dbReference>
<dbReference type="HAMAP" id="MF_00262">
    <property type="entry name" value="MinE"/>
    <property type="match status" value="1"/>
</dbReference>
<dbReference type="InterPro" id="IPR005527">
    <property type="entry name" value="MinE"/>
</dbReference>
<dbReference type="InterPro" id="IPR036707">
    <property type="entry name" value="MinE_sf"/>
</dbReference>
<dbReference type="NCBIfam" id="TIGR01215">
    <property type="entry name" value="minE"/>
    <property type="match status" value="1"/>
</dbReference>
<dbReference type="NCBIfam" id="NF001422">
    <property type="entry name" value="PRK00296.1"/>
    <property type="match status" value="1"/>
</dbReference>
<dbReference type="Pfam" id="PF03776">
    <property type="entry name" value="MinE"/>
    <property type="match status" value="1"/>
</dbReference>
<dbReference type="SUPFAM" id="SSF55229">
    <property type="entry name" value="Cell division protein MinE topological specificity domain"/>
    <property type="match status" value="1"/>
</dbReference>